<organism>
    <name type="scientific">Streptococcus pneumoniae (strain P1031)</name>
    <dbReference type="NCBI Taxonomy" id="488223"/>
    <lineage>
        <taxon>Bacteria</taxon>
        <taxon>Bacillati</taxon>
        <taxon>Bacillota</taxon>
        <taxon>Bacilli</taxon>
        <taxon>Lactobacillales</taxon>
        <taxon>Streptococcaceae</taxon>
        <taxon>Streptococcus</taxon>
    </lineage>
</organism>
<name>RNH3_STRZP</name>
<dbReference type="EC" id="3.1.26.4" evidence="1"/>
<dbReference type="EMBL" id="CP000920">
    <property type="protein sequence ID" value="ACO21548.1"/>
    <property type="molecule type" value="Genomic_DNA"/>
</dbReference>
<dbReference type="RefSeq" id="WP_000146857.1">
    <property type="nucleotide sequence ID" value="NC_012467.1"/>
</dbReference>
<dbReference type="SMR" id="C1CIQ5"/>
<dbReference type="KEGG" id="spp:SPP_0435"/>
<dbReference type="HOGENOM" id="CLU_059546_1_0_9"/>
<dbReference type="GO" id="GO:0005737">
    <property type="term" value="C:cytoplasm"/>
    <property type="evidence" value="ECO:0007669"/>
    <property type="project" value="UniProtKB-SubCell"/>
</dbReference>
<dbReference type="GO" id="GO:0032299">
    <property type="term" value="C:ribonuclease H2 complex"/>
    <property type="evidence" value="ECO:0007669"/>
    <property type="project" value="TreeGrafter"/>
</dbReference>
<dbReference type="GO" id="GO:0000287">
    <property type="term" value="F:magnesium ion binding"/>
    <property type="evidence" value="ECO:0007669"/>
    <property type="project" value="UniProtKB-UniRule"/>
</dbReference>
<dbReference type="GO" id="GO:0003723">
    <property type="term" value="F:RNA binding"/>
    <property type="evidence" value="ECO:0007669"/>
    <property type="project" value="InterPro"/>
</dbReference>
<dbReference type="GO" id="GO:0004523">
    <property type="term" value="F:RNA-DNA hybrid ribonuclease activity"/>
    <property type="evidence" value="ECO:0007669"/>
    <property type="project" value="UniProtKB-UniRule"/>
</dbReference>
<dbReference type="GO" id="GO:0043137">
    <property type="term" value="P:DNA replication, removal of RNA primer"/>
    <property type="evidence" value="ECO:0007669"/>
    <property type="project" value="TreeGrafter"/>
</dbReference>
<dbReference type="GO" id="GO:0006298">
    <property type="term" value="P:mismatch repair"/>
    <property type="evidence" value="ECO:0007669"/>
    <property type="project" value="TreeGrafter"/>
</dbReference>
<dbReference type="CDD" id="cd06590">
    <property type="entry name" value="RNase_HII_bacteria_HIII_like"/>
    <property type="match status" value="1"/>
</dbReference>
<dbReference type="CDD" id="cd14796">
    <property type="entry name" value="RNAse_HIII_N"/>
    <property type="match status" value="1"/>
</dbReference>
<dbReference type="FunFam" id="3.30.420.10:FF:000047">
    <property type="entry name" value="Ribonuclease HIII"/>
    <property type="match status" value="1"/>
</dbReference>
<dbReference type="Gene3D" id="3.30.420.10">
    <property type="entry name" value="Ribonuclease H-like superfamily/Ribonuclease H"/>
    <property type="match status" value="1"/>
</dbReference>
<dbReference type="Gene3D" id="3.30.310.10">
    <property type="entry name" value="TATA-Binding Protein"/>
    <property type="match status" value="1"/>
</dbReference>
<dbReference type="HAMAP" id="MF_00053">
    <property type="entry name" value="RNase_HIII"/>
    <property type="match status" value="1"/>
</dbReference>
<dbReference type="InterPro" id="IPR001352">
    <property type="entry name" value="RNase_HII/HIII"/>
</dbReference>
<dbReference type="InterPro" id="IPR024567">
    <property type="entry name" value="RNase_HII/HIII_dom"/>
</dbReference>
<dbReference type="InterPro" id="IPR004641">
    <property type="entry name" value="RNase_HIII"/>
</dbReference>
<dbReference type="InterPro" id="IPR024568">
    <property type="entry name" value="RNase_HIII_N"/>
</dbReference>
<dbReference type="InterPro" id="IPR012337">
    <property type="entry name" value="RNaseH-like_sf"/>
</dbReference>
<dbReference type="InterPro" id="IPR036397">
    <property type="entry name" value="RNaseH_sf"/>
</dbReference>
<dbReference type="InterPro" id="IPR012295">
    <property type="entry name" value="TBP_dom_sf"/>
</dbReference>
<dbReference type="NCBIfam" id="TIGR00716">
    <property type="entry name" value="rnhC"/>
    <property type="match status" value="1"/>
</dbReference>
<dbReference type="PANTHER" id="PTHR10954:SF23">
    <property type="entry name" value="RIBONUCLEASE"/>
    <property type="match status" value="1"/>
</dbReference>
<dbReference type="PANTHER" id="PTHR10954">
    <property type="entry name" value="RIBONUCLEASE H2 SUBUNIT A"/>
    <property type="match status" value="1"/>
</dbReference>
<dbReference type="Pfam" id="PF11858">
    <property type="entry name" value="DUF3378"/>
    <property type="match status" value="1"/>
</dbReference>
<dbReference type="Pfam" id="PF01351">
    <property type="entry name" value="RNase_HII"/>
    <property type="match status" value="1"/>
</dbReference>
<dbReference type="PIRSF" id="PIRSF037748">
    <property type="entry name" value="RnhC"/>
    <property type="match status" value="1"/>
</dbReference>
<dbReference type="SUPFAM" id="SSF53098">
    <property type="entry name" value="Ribonuclease H-like"/>
    <property type="match status" value="1"/>
</dbReference>
<dbReference type="PROSITE" id="PS51975">
    <property type="entry name" value="RNASE_H_2"/>
    <property type="match status" value="1"/>
</dbReference>
<protein>
    <recommendedName>
        <fullName evidence="1">Ribonuclease HIII</fullName>
        <shortName evidence="1">RNase HIII</shortName>
        <ecNumber evidence="1">3.1.26.4</ecNumber>
    </recommendedName>
</protein>
<comment type="function">
    <text evidence="1">Endonuclease that specifically degrades the RNA of RNA-DNA hybrids.</text>
</comment>
<comment type="catalytic activity">
    <reaction evidence="1">
        <text>Endonucleolytic cleavage to 5'-phosphomonoester.</text>
        <dbReference type="EC" id="3.1.26.4"/>
    </reaction>
</comment>
<comment type="cofactor">
    <cofactor evidence="1">
        <name>Mn(2+)</name>
        <dbReference type="ChEBI" id="CHEBI:29035"/>
    </cofactor>
    <cofactor evidence="1">
        <name>Mg(2+)</name>
        <dbReference type="ChEBI" id="CHEBI:18420"/>
    </cofactor>
    <text evidence="1">Manganese or magnesium. Binds 1 divalent metal ion per monomer in the absence of substrate. May bind a second metal ion after substrate binding.</text>
</comment>
<comment type="subcellular location">
    <subcellularLocation>
        <location evidence="1">Cytoplasm</location>
    </subcellularLocation>
</comment>
<comment type="similarity">
    <text evidence="1">Belongs to the RNase HII family. RnhC subfamily.</text>
</comment>
<evidence type="ECO:0000255" key="1">
    <source>
        <dbReference type="HAMAP-Rule" id="MF_00053"/>
    </source>
</evidence>
<evidence type="ECO:0000255" key="2">
    <source>
        <dbReference type="PROSITE-ProRule" id="PRU01319"/>
    </source>
</evidence>
<proteinExistence type="inferred from homology"/>
<gene>
    <name evidence="1" type="primary">rnhC</name>
    <name type="ordered locus">SPP_0435</name>
</gene>
<accession>C1CIQ5</accession>
<sequence>MASITLTPSEKDIQAFLEHYQTSLAPSKNPYIRYFLKLPQATVSIYTSGKILLQGEGAEKYASFFGYQAVEQTSGQNLPLIGTDEVGNGSYFGGLAVVAAFVTPDQHDFLRKLGVGDSKTLTDQKIRQIAPILKEKIQHQALLLSPSKYNEVIGDRYNAVSVKVALHNQAIYLLLQKGVQPEKIVIDAFTSAKNYDKYLAQEANRFSNSISLEEKAEGKYLAVAVSSVIARDLFLENLENLGRELGYQLPSGAGTASDKVASQILQAYGMQGLNFCAKLHFKNTEKAKNA</sequence>
<keyword id="KW-0963">Cytoplasm</keyword>
<keyword id="KW-0255">Endonuclease</keyword>
<keyword id="KW-0378">Hydrolase</keyword>
<keyword id="KW-0460">Magnesium</keyword>
<keyword id="KW-0479">Metal-binding</keyword>
<keyword id="KW-0540">Nuclease</keyword>
<reference key="1">
    <citation type="journal article" date="2010" name="Genome Biol.">
        <title>Structure and dynamics of the pan-genome of Streptococcus pneumoniae and closely related species.</title>
        <authorList>
            <person name="Donati C."/>
            <person name="Hiller N.L."/>
            <person name="Tettelin H."/>
            <person name="Muzzi A."/>
            <person name="Croucher N.J."/>
            <person name="Angiuoli S.V."/>
            <person name="Oggioni M."/>
            <person name="Dunning Hotopp J.C."/>
            <person name="Hu F.Z."/>
            <person name="Riley D.R."/>
            <person name="Covacci A."/>
            <person name="Mitchell T.J."/>
            <person name="Bentley S.D."/>
            <person name="Kilian M."/>
            <person name="Ehrlich G.D."/>
            <person name="Rappuoli R."/>
            <person name="Moxon E.R."/>
            <person name="Masignani V."/>
        </authorList>
    </citation>
    <scope>NUCLEOTIDE SEQUENCE [LARGE SCALE GENOMIC DNA]</scope>
    <source>
        <strain>P1031</strain>
    </source>
</reference>
<feature type="chain" id="PRO_1000194458" description="Ribonuclease HIII">
    <location>
        <begin position="1"/>
        <end position="290"/>
    </location>
</feature>
<feature type="domain" description="RNase H type-2" evidence="2">
    <location>
        <begin position="78"/>
        <end position="290"/>
    </location>
</feature>
<feature type="binding site" evidence="1">
    <location>
        <position position="84"/>
    </location>
    <ligand>
        <name>a divalent metal cation</name>
        <dbReference type="ChEBI" id="CHEBI:60240"/>
    </ligand>
</feature>
<feature type="binding site" evidence="1">
    <location>
        <position position="85"/>
    </location>
    <ligand>
        <name>a divalent metal cation</name>
        <dbReference type="ChEBI" id="CHEBI:60240"/>
    </ligand>
</feature>
<feature type="binding site" evidence="1">
    <location>
        <position position="187"/>
    </location>
    <ligand>
        <name>a divalent metal cation</name>
        <dbReference type="ChEBI" id="CHEBI:60240"/>
    </ligand>
</feature>